<proteinExistence type="evidence at protein level"/>
<reference key="1">
    <citation type="journal article" date="1995" name="Appl. Environ. Microbiol.">
        <title>Conservation of the genes for dissimilatory sulfite reductase from Desulfovibrio vulgaris and Archaeoglobus fulgidus allows their detection by PCR.</title>
        <authorList>
            <person name="Karkhoff-Schweizer R.R."/>
            <person name="Huber D.P.W."/>
            <person name="Voordouw G."/>
        </authorList>
    </citation>
    <scope>NUCLEOTIDE SEQUENCE [GENOMIC DNA]</scope>
</reference>
<reference key="2">
    <citation type="journal article" date="2004" name="Nat. Biotechnol.">
        <title>The genome sequence of the anaerobic, sulfate-reducing bacterium Desulfovibrio vulgaris Hildenborough.</title>
        <authorList>
            <person name="Heidelberg J.F."/>
            <person name="Seshadri R."/>
            <person name="Haveman S.A."/>
            <person name="Hemme C.L."/>
            <person name="Paulsen I.T."/>
            <person name="Kolonay J.F."/>
            <person name="Eisen J.A."/>
            <person name="Ward N.L."/>
            <person name="Methe B.A."/>
            <person name="Brinkac L.M."/>
            <person name="Daugherty S.C."/>
            <person name="DeBoy R.T."/>
            <person name="Dodson R.J."/>
            <person name="Durkin A.S."/>
            <person name="Madupu R."/>
            <person name="Nelson W.C."/>
            <person name="Sullivan S.A."/>
            <person name="Fouts D.E."/>
            <person name="Haft D.H."/>
            <person name="Selengut J."/>
            <person name="Peterson J.D."/>
            <person name="Davidsen T.M."/>
            <person name="Zafar N."/>
            <person name="Zhou L."/>
            <person name="Radune D."/>
            <person name="Dimitrov G."/>
            <person name="Hance M."/>
            <person name="Tran K."/>
            <person name="Khouri H.M."/>
            <person name="Gill J."/>
            <person name="Utterback T.R."/>
            <person name="Feldblyum T.V."/>
            <person name="Wall J.D."/>
            <person name="Voordouw G."/>
            <person name="Fraser C.M."/>
        </authorList>
    </citation>
    <scope>NUCLEOTIDE SEQUENCE [LARGE SCALE GENOMIC DNA]</scope>
    <source>
        <strain>ATCC 29579 / DSM 644 / CCUG 34227 / NCIMB 8303 / VKM B-1760 / Hildenborough</strain>
    </source>
</reference>
<reference key="3">
    <citation type="journal article" date="1992" name="Eur. J. Biochem.">
        <title>The third subunit of desulfoviridin-type dissimilatory sulfite reductases.</title>
        <authorList>
            <person name="Pierik A.J."/>
            <person name="Duyvis M.G."/>
            <person name="van Helvoort J.M.L.M."/>
            <person name="Wolbert R.B.G."/>
            <person name="Hagen W.R."/>
        </authorList>
    </citation>
    <scope>PROTEIN SEQUENCE OF 2-16</scope>
    <scope>SUBUNIT</scope>
</reference>
<reference key="4">
    <citation type="journal article" date="1973" name="J. Bacteriol.">
        <title>Isolation of assimilatory- and dissimilatory-type sulfite reductases from Desulfovibrio vulgaris.</title>
        <authorList>
            <person name="Lee J.-P."/>
            <person name="LeGall J."/>
            <person name="Peck H.D. Jr."/>
        </authorList>
    </citation>
    <scope>CATALYTIC ACTIVITY</scope>
</reference>
<reference key="5">
    <citation type="journal article" date="1994" name="Eur. J. Biochem.">
        <title>Desulfoviridin, a multimeric-dissimilatory sulfite reductase from Desulfovibrio vulgaris (Hildenborough). Purification, characterization, kinetics and EPR studies.</title>
        <authorList>
            <person name="Wolfe B.M."/>
            <person name="Lui S.M."/>
            <person name="Cowan J.A."/>
        </authorList>
    </citation>
    <scope>FUNCTION</scope>
    <scope>CATALYTIC ACTIVITY</scope>
    <scope>EPR SPECTROSCOPY</scope>
    <scope>BIOPHYSICOCHEMICAL PROPERTIES</scope>
</reference>
<reference key="6">
    <citation type="journal article" date="2008" name="J. Biol. Chem.">
        <title>The crystal structure of Desulfovibrio vulgaris dissimilatory sulfite reductase bound to DsrC provides novel insights into the mechanism of sulfate respiration.</title>
        <authorList>
            <person name="Oliveira T.F."/>
            <person name="Vonrhein C."/>
            <person name="Matias P.M."/>
            <person name="Venceslau S.S."/>
            <person name="Pereira I.A.C."/>
            <person name="Archer M."/>
        </authorList>
    </citation>
    <scope>X-RAY CRYSTALLOGRAPHY (2.10 ANGSTROMS) IN COMPLEX WITH DSVA; DSVC; IRON-SULFUR (4FE-4S) AND SIROHEME</scope>
    <scope>SUBUNIT</scope>
    <scope>COFACTOR</scope>
    <scope>REACTION MECHANISM</scope>
</reference>
<feature type="initiator methionine" description="Removed" evidence="2">
    <location>
        <position position="1"/>
    </location>
</feature>
<feature type="chain" id="PRO_0000080032" description="Sulfite reductase, dissimilatory-type subunit beta">
    <location>
        <begin position="2"/>
        <end position="381"/>
    </location>
</feature>
<feature type="domain" description="4Fe-4S ferredoxin-type" evidence="1">
    <location>
        <begin position="249"/>
        <end position="276"/>
    </location>
</feature>
<feature type="binding site" evidence="3 9">
    <location>
        <position position="151"/>
    </location>
    <ligand>
        <name>[4Fe-4S] cluster</name>
        <dbReference type="ChEBI" id="CHEBI:49883"/>
        <label>1</label>
    </ligand>
</feature>
<feature type="binding site" evidence="3 9">
    <location>
        <position position="188"/>
    </location>
    <ligand>
        <name>[4Fe-4S] cluster</name>
        <dbReference type="ChEBI" id="CHEBI:49883"/>
        <label>1</label>
    </ligand>
</feature>
<feature type="binding site" evidence="3 9">
    <location>
        <position position="189"/>
    </location>
    <ligand>
        <name>[4Fe-4S] cluster</name>
        <dbReference type="ChEBI" id="CHEBI:49883"/>
        <label>1</label>
    </ligand>
</feature>
<feature type="binding site" evidence="3 9">
    <location>
        <position position="193"/>
    </location>
    <ligand>
        <name>[4Fe-4S] cluster</name>
        <dbReference type="ChEBI" id="CHEBI:49883"/>
        <label>1</label>
    </ligand>
</feature>
<feature type="binding site" description="axial binding residue" evidence="8">
    <location>
        <position position="193"/>
    </location>
    <ligand>
        <name>siroheme</name>
        <dbReference type="ChEBI" id="CHEBI:60052"/>
    </ligand>
    <ligandPart>
        <name>Fe</name>
        <dbReference type="ChEBI" id="CHEBI:18248"/>
    </ligandPart>
</feature>
<feature type="binding site" evidence="3 9">
    <location>
        <position position="231"/>
    </location>
    <ligand>
        <name>[4Fe-4S] cluster</name>
        <dbReference type="ChEBI" id="CHEBI:49883"/>
        <label>2</label>
    </ligand>
</feature>
<feature type="binding site" evidence="3 9">
    <location>
        <position position="258"/>
    </location>
    <ligand>
        <name>[4Fe-4S] cluster</name>
        <dbReference type="ChEBI" id="CHEBI:49883"/>
        <label>2</label>
    </ligand>
</feature>
<feature type="binding site" evidence="3 9">
    <location>
        <position position="261"/>
    </location>
    <ligand>
        <name>[4Fe-4S] cluster</name>
        <dbReference type="ChEBI" id="CHEBI:49883"/>
        <label>2</label>
    </ligand>
</feature>
<feature type="binding site" evidence="3 9">
    <location>
        <position position="264"/>
    </location>
    <ligand>
        <name>[4Fe-4S] cluster</name>
        <dbReference type="ChEBI" id="CHEBI:49883"/>
        <label>2</label>
    </ligand>
</feature>
<feature type="turn" evidence="10">
    <location>
        <begin position="13"/>
        <end position="16"/>
    </location>
</feature>
<feature type="turn" evidence="10">
    <location>
        <begin position="26"/>
        <end position="29"/>
    </location>
</feature>
<feature type="helix" evidence="10">
    <location>
        <begin position="32"/>
        <end position="37"/>
    </location>
</feature>
<feature type="strand" evidence="10">
    <location>
        <begin position="41"/>
        <end position="48"/>
    </location>
</feature>
<feature type="strand" evidence="10">
    <location>
        <begin position="51"/>
        <end position="56"/>
    </location>
</feature>
<feature type="strand" evidence="10">
    <location>
        <begin position="61"/>
        <end position="67"/>
    </location>
</feature>
<feature type="strand" evidence="10">
    <location>
        <begin position="71"/>
        <end position="74"/>
    </location>
</feature>
<feature type="helix" evidence="10">
    <location>
        <begin position="75"/>
        <end position="88"/>
    </location>
</feature>
<feature type="strand" evidence="10">
    <location>
        <begin position="92"/>
        <end position="95"/>
    </location>
</feature>
<feature type="strand" evidence="10">
    <location>
        <begin position="101"/>
        <end position="107"/>
    </location>
</feature>
<feature type="helix" evidence="10">
    <location>
        <begin position="108"/>
        <end position="120"/>
    </location>
</feature>
<feature type="strand" evidence="10">
    <location>
        <begin position="128"/>
        <end position="130"/>
    </location>
</feature>
<feature type="strand" evidence="10">
    <location>
        <begin position="136"/>
        <end position="139"/>
    </location>
</feature>
<feature type="helix" evidence="10">
    <location>
        <begin position="147"/>
        <end position="149"/>
    </location>
</feature>
<feature type="helix" evidence="10">
    <location>
        <begin position="159"/>
        <end position="173"/>
    </location>
</feature>
<feature type="strand" evidence="10">
    <location>
        <begin position="178"/>
        <end position="180"/>
    </location>
</feature>
<feature type="strand" evidence="10">
    <location>
        <begin position="184"/>
        <end position="189"/>
    </location>
</feature>
<feature type="helix" evidence="10">
    <location>
        <begin position="196"/>
        <end position="198"/>
    </location>
</feature>
<feature type="strand" evidence="10">
    <location>
        <begin position="199"/>
        <end position="206"/>
    </location>
</feature>
<feature type="helix" evidence="10">
    <location>
        <begin position="215"/>
        <end position="221"/>
    </location>
</feature>
<feature type="helix" evidence="10">
    <location>
        <begin position="224"/>
        <end position="229"/>
    </location>
</feature>
<feature type="strand" evidence="10">
    <location>
        <begin position="236"/>
        <end position="243"/>
    </location>
</feature>
<feature type="strand" evidence="10">
    <location>
        <begin position="246"/>
        <end position="253"/>
    </location>
</feature>
<feature type="helix" evidence="10">
    <location>
        <begin position="255"/>
        <end position="257"/>
    </location>
</feature>
<feature type="helix" evidence="10">
    <location>
        <begin position="263"/>
        <end position="267"/>
    </location>
</feature>
<feature type="turn" evidence="10">
    <location>
        <begin position="276"/>
        <end position="278"/>
    </location>
</feature>
<feature type="strand" evidence="10">
    <location>
        <begin position="280"/>
        <end position="285"/>
    </location>
</feature>
<feature type="strand" evidence="10">
    <location>
        <begin position="292"/>
        <end position="294"/>
    </location>
</feature>
<feature type="strand" evidence="10">
    <location>
        <begin position="300"/>
        <end position="307"/>
    </location>
</feature>
<feature type="turn" evidence="10">
    <location>
        <begin position="310"/>
        <end position="312"/>
    </location>
</feature>
<feature type="helix" evidence="10">
    <location>
        <begin position="314"/>
        <end position="330"/>
    </location>
</feature>
<feature type="helix" evidence="10">
    <location>
        <begin position="337"/>
        <end position="344"/>
    </location>
</feature>
<feature type="helix" evidence="10">
    <location>
        <begin position="346"/>
        <end position="353"/>
    </location>
</feature>
<feature type="helix" evidence="10">
    <location>
        <begin position="359"/>
        <end position="361"/>
    </location>
</feature>
<feature type="helix" evidence="10">
    <location>
        <begin position="367"/>
        <end position="372"/>
    </location>
</feature>
<gene>
    <name type="primary">dsvB</name>
    <name evidence="6" type="synonym">dsrB</name>
    <name type="ordered locus">DVU_0403</name>
</gene>
<organism>
    <name type="scientific">Nitratidesulfovibrio vulgaris (strain ATCC 29579 / DSM 644 / CCUG 34227 / NCIMB 8303 / VKM B-1760 / Hildenborough)</name>
    <name type="common">Desulfovibrio vulgaris</name>
    <dbReference type="NCBI Taxonomy" id="882"/>
    <lineage>
        <taxon>Bacteria</taxon>
        <taxon>Pseudomonadati</taxon>
        <taxon>Thermodesulfobacteriota</taxon>
        <taxon>Desulfovibrionia</taxon>
        <taxon>Desulfovibrionales</taxon>
        <taxon>Desulfovibrionaceae</taxon>
        <taxon>Nitratidesulfovibrio</taxon>
    </lineage>
</organism>
<evidence type="ECO:0000255" key="1">
    <source>
        <dbReference type="PROSITE-ProRule" id="PRU00711"/>
    </source>
</evidence>
<evidence type="ECO:0000269" key="2">
    <source>
    </source>
</evidence>
<evidence type="ECO:0000269" key="3">
    <source>
    </source>
</evidence>
<evidence type="ECO:0000269" key="4">
    <source>
    </source>
</evidence>
<evidence type="ECO:0000269" key="5">
    <source>
    </source>
</evidence>
<evidence type="ECO:0000303" key="6">
    <source>
    </source>
</evidence>
<evidence type="ECO:0000303" key="7">
    <source>
    </source>
</evidence>
<evidence type="ECO:0000305" key="8">
    <source>
    </source>
</evidence>
<evidence type="ECO:0007744" key="9">
    <source>
        <dbReference type="PDB" id="2V4J"/>
    </source>
</evidence>
<evidence type="ECO:0007829" key="10">
    <source>
        <dbReference type="PDB" id="2V4J"/>
    </source>
</evidence>
<sequence>MAFISSGYNPEKPMANRITDIGPRKFDEFFPPVIAKNFGSWLYHEILEPGVLMHVAESGDKVYTVRVGAARLMSITHIREMCDIADKYCGGHLRFTTRNNVEFMVADEASLKALKEDLASRKFDGGSLKFPIGGTGAGVSNIVHTQGWVHCHTPATDASGPVKAIMDEVFEDFQSMRLPAPVRISLACCINMCGAVHCSDIGVVGIHRKPPMIDHEWTDQLCEIPLAVASCPTAAVRPTKLEIGDKKVNTIAIKNERCMYCGNCYTMCPALPISDGEGDGVVIMVGGKVSNRISMPKFSKVVVAYIPNEPPRWPSLTKTIKHIIEVYSANAYKYERLGEWAERIGWERFFSLTGLEFSHHLIDDFRDPAYYTWRQSTQFKF</sequence>
<keyword id="KW-0002">3D-structure</keyword>
<keyword id="KW-0004">4Fe-4S</keyword>
<keyword id="KW-0903">Direct protein sequencing</keyword>
<keyword id="KW-0408">Iron</keyword>
<keyword id="KW-0411">Iron-sulfur</keyword>
<keyword id="KW-0479">Metal-binding</keyword>
<keyword id="KW-0560">Oxidoreductase</keyword>
<keyword id="KW-1185">Reference proteome</keyword>
<name>DSVB_NITV2</name>
<protein>
    <recommendedName>
        <fullName>Sulfite reductase, dissimilatory-type subunit beta</fullName>
        <ecNumber evidence="4 5">1.8.1.22</ecNumber>
    </recommendedName>
    <alternativeName>
        <fullName evidence="7">Desulfoviridin subunit beta</fullName>
    </alternativeName>
    <alternativeName>
        <fullName evidence="6">Dissimilatory sulfite reductase subunit beta</fullName>
        <shortName evidence="6">dSiR beta</shortName>
    </alternativeName>
    <alternativeName>
        <fullName>Hydrogensulfite reductase subunit beta</fullName>
    </alternativeName>
</protein>
<accession>P45575</accession>
<comment type="function">
    <text evidence="2 5">Catalyzes the reduction of sulfite to sulfide. This is the terminal oxidation reaction in sulfate respiration, a process catalyzed by the sulfate-reducing bacteria.</text>
</comment>
<comment type="catalytic activity">
    <reaction evidence="4 5">
        <text>[DsrC protein]-trisulfide + NAD(+) + 3 H2O = [DsrC protein]-dithiol + sulfite + NADH + 3 H(+)</text>
        <dbReference type="Rhea" id="RHEA:78943"/>
        <dbReference type="Rhea" id="RHEA-COMP:11723"/>
        <dbReference type="Rhea" id="RHEA-COMP:19152"/>
        <dbReference type="ChEBI" id="CHEBI:15377"/>
        <dbReference type="ChEBI" id="CHEBI:15378"/>
        <dbReference type="ChEBI" id="CHEBI:17359"/>
        <dbReference type="ChEBI" id="CHEBI:29950"/>
        <dbReference type="ChEBI" id="CHEBI:57540"/>
        <dbReference type="ChEBI" id="CHEBI:57945"/>
        <dbReference type="ChEBI" id="CHEBI:229579"/>
        <dbReference type="EC" id="1.8.1.22"/>
    </reaction>
</comment>
<comment type="cofactor">
    <cofactor evidence="3">
        <name>[4Fe-4S] cluster</name>
        <dbReference type="ChEBI" id="CHEBI:49883"/>
    </cofactor>
    <text evidence="3">Binds 2 [4Fe-4S] clusters per subunit.</text>
</comment>
<comment type="cofactor">
    <cofactor evidence="3">
        <name>siroheme</name>
        <dbReference type="ChEBI" id="CHEBI:60052"/>
    </cofactor>
    <text evidence="3">Binds 1 siroheme per subunit.</text>
</comment>
<comment type="biophysicochemical properties">
    <kinetics>
        <KM evidence="5">0.06 mM for sulfite</KM>
        <KM evidence="5">0.028 mM for nitrite</KM>
        <text evidence="5">kcat is 0.31 sec(-1) for sulfite. kcat is 0.038 sec(-1) for nitrite.</text>
    </kinetics>
</comment>
<comment type="subunit">
    <text evidence="2 3">Heterohexamer of two alpha, two beta and two gamma subunits.</text>
</comment>
<comment type="interaction">
    <interactant intactId="EBI-9016987">
        <id>P45575</id>
    </interactant>
    <interactant intactId="EBI-9016991">
        <id>P45574</id>
        <label>dsvA</label>
    </interactant>
    <organismsDiffer>false</organismsDiffer>
    <experiments>5</experiments>
</comment>
<dbReference type="EC" id="1.8.1.22" evidence="4 5"/>
<dbReference type="EMBL" id="U16723">
    <property type="protein sequence ID" value="AAA70108.1"/>
    <property type="molecule type" value="Genomic_DNA"/>
</dbReference>
<dbReference type="EMBL" id="AE017285">
    <property type="protein sequence ID" value="AAS94886.1"/>
    <property type="molecule type" value="Genomic_DNA"/>
</dbReference>
<dbReference type="PIR" id="S21238">
    <property type="entry name" value="S21238"/>
</dbReference>
<dbReference type="RefSeq" id="WP_010937710.1">
    <property type="nucleotide sequence ID" value="NC_002937.3"/>
</dbReference>
<dbReference type="RefSeq" id="YP_009627.1">
    <property type="nucleotide sequence ID" value="NC_002937.3"/>
</dbReference>
<dbReference type="PDB" id="2V4J">
    <property type="method" value="X-ray"/>
    <property type="resolution" value="2.10 A"/>
    <property type="chains" value="B/E=1-381"/>
</dbReference>
<dbReference type="PDBsum" id="2V4J"/>
<dbReference type="SMR" id="P45575"/>
<dbReference type="IntAct" id="P45575">
    <property type="interactions" value="4"/>
</dbReference>
<dbReference type="STRING" id="882.DVU_0403"/>
<dbReference type="PaxDb" id="882-DVU_0403"/>
<dbReference type="EnsemblBacteria" id="AAS94886">
    <property type="protein sequence ID" value="AAS94886"/>
    <property type="gene ID" value="DVU_0403"/>
</dbReference>
<dbReference type="KEGG" id="dvu:DVU_0403"/>
<dbReference type="PATRIC" id="fig|882.5.peg.380"/>
<dbReference type="eggNOG" id="COG2221">
    <property type="taxonomic scope" value="Bacteria"/>
</dbReference>
<dbReference type="HOGENOM" id="CLU_044442_0_0_7"/>
<dbReference type="OrthoDB" id="9766142at2"/>
<dbReference type="PhylomeDB" id="P45575"/>
<dbReference type="BioCyc" id="MetaCyc:MONOMER-12512"/>
<dbReference type="BRENDA" id="1.8.99.5">
    <property type="organism ID" value="1914"/>
</dbReference>
<dbReference type="EvolutionaryTrace" id="P45575"/>
<dbReference type="Proteomes" id="UP000002194">
    <property type="component" value="Chromosome"/>
</dbReference>
<dbReference type="GO" id="GO:0009337">
    <property type="term" value="C:sulfite reductase complex (NADPH)"/>
    <property type="evidence" value="ECO:0007669"/>
    <property type="project" value="TreeGrafter"/>
</dbReference>
<dbReference type="GO" id="GO:0051539">
    <property type="term" value="F:4 iron, 4 sulfur cluster binding"/>
    <property type="evidence" value="ECO:0007669"/>
    <property type="project" value="UniProtKB-KW"/>
</dbReference>
<dbReference type="GO" id="GO:0018551">
    <property type="term" value="F:dissimilatory sulfite reductase (NADH) activity"/>
    <property type="evidence" value="ECO:0007669"/>
    <property type="project" value="InterPro"/>
</dbReference>
<dbReference type="GO" id="GO:0009055">
    <property type="term" value="F:electron transfer activity"/>
    <property type="evidence" value="ECO:0007669"/>
    <property type="project" value="InterPro"/>
</dbReference>
<dbReference type="GO" id="GO:0020037">
    <property type="term" value="F:heme binding"/>
    <property type="evidence" value="ECO:0007669"/>
    <property type="project" value="InterPro"/>
</dbReference>
<dbReference type="GO" id="GO:0046872">
    <property type="term" value="F:metal ion binding"/>
    <property type="evidence" value="ECO:0007669"/>
    <property type="project" value="UniProtKB-KW"/>
</dbReference>
<dbReference type="GO" id="GO:0050311">
    <property type="term" value="F:sulfite reductase (ferredoxin) activity"/>
    <property type="evidence" value="ECO:0007669"/>
    <property type="project" value="TreeGrafter"/>
</dbReference>
<dbReference type="GO" id="GO:0016002">
    <property type="term" value="F:sulfite reductase activity"/>
    <property type="evidence" value="ECO:0007669"/>
    <property type="project" value="TreeGrafter"/>
</dbReference>
<dbReference type="GO" id="GO:0000103">
    <property type="term" value="P:sulfate assimilation"/>
    <property type="evidence" value="ECO:0007669"/>
    <property type="project" value="TreeGrafter"/>
</dbReference>
<dbReference type="Gene3D" id="3.30.70.20">
    <property type="match status" value="1"/>
</dbReference>
<dbReference type="Gene3D" id="3.30.70.3340">
    <property type="match status" value="1"/>
</dbReference>
<dbReference type="Gene3D" id="3.30.413.10">
    <property type="entry name" value="Sulfite Reductase Hemoprotein, domain 1"/>
    <property type="match status" value="1"/>
</dbReference>
<dbReference type="InterPro" id="IPR017896">
    <property type="entry name" value="4Fe4S_Fe-S-bd"/>
</dbReference>
<dbReference type="InterPro" id="IPR017900">
    <property type="entry name" value="4Fe4S_Fe_S_CS"/>
</dbReference>
<dbReference type="InterPro" id="IPR011808">
    <property type="entry name" value="DsrB"/>
</dbReference>
<dbReference type="InterPro" id="IPR005117">
    <property type="entry name" value="NiRdtase/SiRdtase_haem-b_fer"/>
</dbReference>
<dbReference type="InterPro" id="IPR036136">
    <property type="entry name" value="Nit/Sulf_reduc_fer-like_dom_sf"/>
</dbReference>
<dbReference type="InterPro" id="IPR006067">
    <property type="entry name" value="NO2/SO3_Rdtase_4Fe4S_dom"/>
</dbReference>
<dbReference type="InterPro" id="IPR045169">
    <property type="entry name" value="NO2/SO3_Rdtase_4Fe4S_prot"/>
</dbReference>
<dbReference type="InterPro" id="IPR045854">
    <property type="entry name" value="NO2/SO3_Rdtase_4Fe4S_sf"/>
</dbReference>
<dbReference type="NCBIfam" id="TIGR02066">
    <property type="entry name" value="dsrB"/>
    <property type="match status" value="1"/>
</dbReference>
<dbReference type="PANTHER" id="PTHR11493:SF47">
    <property type="entry name" value="SULFITE REDUCTASE [NADPH] SUBUNIT BETA"/>
    <property type="match status" value="1"/>
</dbReference>
<dbReference type="PANTHER" id="PTHR11493">
    <property type="entry name" value="SULFITE REDUCTASE [NADPH] SUBUNIT BETA-RELATED"/>
    <property type="match status" value="1"/>
</dbReference>
<dbReference type="Pfam" id="PF01077">
    <property type="entry name" value="NIR_SIR"/>
    <property type="match status" value="1"/>
</dbReference>
<dbReference type="Pfam" id="PF03460">
    <property type="entry name" value="NIR_SIR_ferr"/>
    <property type="match status" value="1"/>
</dbReference>
<dbReference type="SUPFAM" id="SSF54862">
    <property type="entry name" value="4Fe-4S ferredoxins"/>
    <property type="match status" value="1"/>
</dbReference>
<dbReference type="SUPFAM" id="SSF56014">
    <property type="entry name" value="Nitrite and sulphite reductase 4Fe-4S domain-like"/>
    <property type="match status" value="1"/>
</dbReference>
<dbReference type="SUPFAM" id="SSF55124">
    <property type="entry name" value="Nitrite/Sulfite reductase N-terminal domain-like"/>
    <property type="match status" value="1"/>
</dbReference>
<dbReference type="PROSITE" id="PS00198">
    <property type="entry name" value="4FE4S_FER_1"/>
    <property type="match status" value="1"/>
</dbReference>
<dbReference type="PROSITE" id="PS51379">
    <property type="entry name" value="4FE4S_FER_2"/>
    <property type="match status" value="1"/>
</dbReference>